<reference key="1">
    <citation type="journal article" date="2008" name="J. Bacteriol.">
        <title>The pangenome structure of Escherichia coli: comparative genomic analysis of E. coli commensal and pathogenic isolates.</title>
        <authorList>
            <person name="Rasko D.A."/>
            <person name="Rosovitz M.J."/>
            <person name="Myers G.S.A."/>
            <person name="Mongodin E.F."/>
            <person name="Fricke W.F."/>
            <person name="Gajer P."/>
            <person name="Crabtree J."/>
            <person name="Sebaihia M."/>
            <person name="Thomson N.R."/>
            <person name="Chaudhuri R."/>
            <person name="Henderson I.R."/>
            <person name="Sperandio V."/>
            <person name="Ravel J."/>
        </authorList>
    </citation>
    <scope>NUCLEOTIDE SEQUENCE [LARGE SCALE GENOMIC DNA]</scope>
    <source>
        <strain>HS</strain>
    </source>
</reference>
<gene>
    <name evidence="1" type="primary">rplN</name>
    <name type="ordered locus">EcHS_A3504</name>
</gene>
<feature type="chain" id="PRO_1000068006" description="Large ribosomal subunit protein uL14">
    <location>
        <begin position="1"/>
        <end position="123"/>
    </location>
</feature>
<evidence type="ECO:0000255" key="1">
    <source>
        <dbReference type="HAMAP-Rule" id="MF_01367"/>
    </source>
</evidence>
<evidence type="ECO:0000305" key="2"/>
<sequence>MIQEQTMLNVADNSGARRVMCIKVLGGSHRRYAGVGDIIKITIKEAIPRGKVKKGDVLKAVVVRTKKGVRRPDGSVIRFDGNACVLLNNNSEQPIGTRIFGPVTRELRSEKFMKIISLAPEVL</sequence>
<dbReference type="EMBL" id="CP000802">
    <property type="protein sequence ID" value="ABV07719.1"/>
    <property type="molecule type" value="Genomic_DNA"/>
</dbReference>
<dbReference type="RefSeq" id="WP_000613955.1">
    <property type="nucleotide sequence ID" value="NC_009800.1"/>
</dbReference>
<dbReference type="SMR" id="A8A5B5"/>
<dbReference type="GeneID" id="93778677"/>
<dbReference type="KEGG" id="ecx:EcHS_A3504"/>
<dbReference type="HOGENOM" id="CLU_095071_2_1_6"/>
<dbReference type="GO" id="GO:0022625">
    <property type="term" value="C:cytosolic large ribosomal subunit"/>
    <property type="evidence" value="ECO:0007669"/>
    <property type="project" value="TreeGrafter"/>
</dbReference>
<dbReference type="GO" id="GO:0070180">
    <property type="term" value="F:large ribosomal subunit rRNA binding"/>
    <property type="evidence" value="ECO:0007669"/>
    <property type="project" value="TreeGrafter"/>
</dbReference>
<dbReference type="GO" id="GO:0003735">
    <property type="term" value="F:structural constituent of ribosome"/>
    <property type="evidence" value="ECO:0007669"/>
    <property type="project" value="InterPro"/>
</dbReference>
<dbReference type="GO" id="GO:0006412">
    <property type="term" value="P:translation"/>
    <property type="evidence" value="ECO:0007669"/>
    <property type="project" value="UniProtKB-UniRule"/>
</dbReference>
<dbReference type="CDD" id="cd00337">
    <property type="entry name" value="Ribosomal_uL14"/>
    <property type="match status" value="1"/>
</dbReference>
<dbReference type="FunFam" id="2.40.150.20:FF:000001">
    <property type="entry name" value="50S ribosomal protein L14"/>
    <property type="match status" value="1"/>
</dbReference>
<dbReference type="Gene3D" id="2.40.150.20">
    <property type="entry name" value="Ribosomal protein L14"/>
    <property type="match status" value="1"/>
</dbReference>
<dbReference type="HAMAP" id="MF_01367">
    <property type="entry name" value="Ribosomal_uL14"/>
    <property type="match status" value="1"/>
</dbReference>
<dbReference type="InterPro" id="IPR000218">
    <property type="entry name" value="Ribosomal_uL14"/>
</dbReference>
<dbReference type="InterPro" id="IPR005745">
    <property type="entry name" value="Ribosomal_uL14_bac-type"/>
</dbReference>
<dbReference type="InterPro" id="IPR019972">
    <property type="entry name" value="Ribosomal_uL14_CS"/>
</dbReference>
<dbReference type="InterPro" id="IPR036853">
    <property type="entry name" value="Ribosomal_uL14_sf"/>
</dbReference>
<dbReference type="NCBIfam" id="TIGR01067">
    <property type="entry name" value="rplN_bact"/>
    <property type="match status" value="1"/>
</dbReference>
<dbReference type="PANTHER" id="PTHR11761">
    <property type="entry name" value="50S/60S RIBOSOMAL PROTEIN L14/L23"/>
    <property type="match status" value="1"/>
</dbReference>
<dbReference type="PANTHER" id="PTHR11761:SF3">
    <property type="entry name" value="LARGE RIBOSOMAL SUBUNIT PROTEIN UL14M"/>
    <property type="match status" value="1"/>
</dbReference>
<dbReference type="Pfam" id="PF00238">
    <property type="entry name" value="Ribosomal_L14"/>
    <property type="match status" value="1"/>
</dbReference>
<dbReference type="SMART" id="SM01374">
    <property type="entry name" value="Ribosomal_L14"/>
    <property type="match status" value="1"/>
</dbReference>
<dbReference type="SUPFAM" id="SSF50193">
    <property type="entry name" value="Ribosomal protein L14"/>
    <property type="match status" value="1"/>
</dbReference>
<dbReference type="PROSITE" id="PS00049">
    <property type="entry name" value="RIBOSOMAL_L14"/>
    <property type="match status" value="1"/>
</dbReference>
<keyword id="KW-0687">Ribonucleoprotein</keyword>
<keyword id="KW-0689">Ribosomal protein</keyword>
<keyword id="KW-0694">RNA-binding</keyword>
<keyword id="KW-0699">rRNA-binding</keyword>
<proteinExistence type="inferred from homology"/>
<protein>
    <recommendedName>
        <fullName evidence="1">Large ribosomal subunit protein uL14</fullName>
    </recommendedName>
    <alternativeName>
        <fullName evidence="2">50S ribosomal protein L14</fullName>
    </alternativeName>
</protein>
<name>RL14_ECOHS</name>
<accession>A8A5B5</accession>
<organism>
    <name type="scientific">Escherichia coli O9:H4 (strain HS)</name>
    <dbReference type="NCBI Taxonomy" id="331112"/>
    <lineage>
        <taxon>Bacteria</taxon>
        <taxon>Pseudomonadati</taxon>
        <taxon>Pseudomonadota</taxon>
        <taxon>Gammaproteobacteria</taxon>
        <taxon>Enterobacterales</taxon>
        <taxon>Enterobacteriaceae</taxon>
        <taxon>Escherichia</taxon>
    </lineage>
</organism>
<comment type="function">
    <text evidence="1">Binds to 23S rRNA. Forms part of two intersubunit bridges in the 70S ribosome.</text>
</comment>
<comment type="subunit">
    <text evidence="1">Part of the 50S ribosomal subunit. Forms a cluster with proteins L3 and L19. In the 70S ribosome, L14 and L19 interact and together make contacts with the 16S rRNA in bridges B5 and B8.</text>
</comment>
<comment type="similarity">
    <text evidence="1">Belongs to the universal ribosomal protein uL14 family.</text>
</comment>